<evidence type="ECO:0000255" key="1">
    <source>
        <dbReference type="HAMAP-Rule" id="MF_01690"/>
    </source>
</evidence>
<proteinExistence type="inferred from homology"/>
<reference key="1">
    <citation type="journal article" date="2008" name="Genome Biol.">
        <title>The complete genome, comparative and functional analysis of Stenotrophomonas maltophilia reveals an organism heavily shielded by drug resistance determinants.</title>
        <authorList>
            <person name="Crossman L.C."/>
            <person name="Gould V.C."/>
            <person name="Dow J.M."/>
            <person name="Vernikos G.S."/>
            <person name="Okazaki A."/>
            <person name="Sebaihia M."/>
            <person name="Saunders D."/>
            <person name="Arrowsmith C."/>
            <person name="Carver T."/>
            <person name="Peters N."/>
            <person name="Adlem E."/>
            <person name="Kerhornou A."/>
            <person name="Lord A."/>
            <person name="Murphy L."/>
            <person name="Seeger K."/>
            <person name="Squares R."/>
            <person name="Rutter S."/>
            <person name="Quail M.A."/>
            <person name="Rajandream M.A."/>
            <person name="Harris D."/>
            <person name="Churcher C."/>
            <person name="Bentley S.D."/>
            <person name="Parkhill J."/>
            <person name="Thomson N.R."/>
            <person name="Avison M.B."/>
        </authorList>
    </citation>
    <scope>NUCLEOTIDE SEQUENCE [LARGE SCALE GENOMIC DNA]</scope>
    <source>
        <strain>K279a</strain>
    </source>
</reference>
<feature type="chain" id="PRO_0000375757" description="Succinyl-diaminopimelate desuccinylase">
    <location>
        <begin position="1"/>
        <end position="375"/>
    </location>
</feature>
<feature type="active site" evidence="1">
    <location>
        <position position="68"/>
    </location>
</feature>
<feature type="active site" description="Proton acceptor" evidence="1">
    <location>
        <position position="133"/>
    </location>
</feature>
<feature type="binding site" evidence="1">
    <location>
        <position position="66"/>
    </location>
    <ligand>
        <name>Zn(2+)</name>
        <dbReference type="ChEBI" id="CHEBI:29105"/>
        <label>1</label>
    </ligand>
</feature>
<feature type="binding site" evidence="1">
    <location>
        <position position="99"/>
    </location>
    <ligand>
        <name>Zn(2+)</name>
        <dbReference type="ChEBI" id="CHEBI:29105"/>
        <label>1</label>
    </ligand>
</feature>
<feature type="binding site" evidence="1">
    <location>
        <position position="99"/>
    </location>
    <ligand>
        <name>Zn(2+)</name>
        <dbReference type="ChEBI" id="CHEBI:29105"/>
        <label>2</label>
    </ligand>
</feature>
<feature type="binding site" evidence="1">
    <location>
        <position position="134"/>
    </location>
    <ligand>
        <name>Zn(2+)</name>
        <dbReference type="ChEBI" id="CHEBI:29105"/>
        <label>2</label>
    </ligand>
</feature>
<feature type="binding site" evidence="1">
    <location>
        <position position="162"/>
    </location>
    <ligand>
        <name>Zn(2+)</name>
        <dbReference type="ChEBI" id="CHEBI:29105"/>
        <label>1</label>
    </ligand>
</feature>
<feature type="binding site" evidence="1">
    <location>
        <position position="348"/>
    </location>
    <ligand>
        <name>Zn(2+)</name>
        <dbReference type="ChEBI" id="CHEBI:29105"/>
        <label>2</label>
    </ligand>
</feature>
<name>DAPE_STRMK</name>
<gene>
    <name evidence="1" type="primary">dapE</name>
    <name type="ordered locus">Smlt1518</name>
</gene>
<protein>
    <recommendedName>
        <fullName evidence="1">Succinyl-diaminopimelate desuccinylase</fullName>
        <shortName evidence="1">SDAP desuccinylase</shortName>
        <ecNumber evidence="1">3.5.1.18</ecNumber>
    </recommendedName>
    <alternativeName>
        <fullName evidence="1">N-succinyl-LL-2,6-diaminoheptanedioate amidohydrolase</fullName>
    </alternativeName>
</protein>
<keyword id="KW-0028">Amino-acid biosynthesis</keyword>
<keyword id="KW-0170">Cobalt</keyword>
<keyword id="KW-0220">Diaminopimelate biosynthesis</keyword>
<keyword id="KW-0378">Hydrolase</keyword>
<keyword id="KW-0457">Lysine biosynthesis</keyword>
<keyword id="KW-0479">Metal-binding</keyword>
<keyword id="KW-1185">Reference proteome</keyword>
<keyword id="KW-0862">Zinc</keyword>
<dbReference type="EC" id="3.5.1.18" evidence="1"/>
<dbReference type="EMBL" id="AM743169">
    <property type="protein sequence ID" value="CAQ45054.1"/>
    <property type="molecule type" value="Genomic_DNA"/>
</dbReference>
<dbReference type="RefSeq" id="WP_012479618.1">
    <property type="nucleotide sequence ID" value="NC_010943.1"/>
</dbReference>
<dbReference type="SMR" id="B2FIC0"/>
<dbReference type="EnsemblBacteria" id="CAQ45054">
    <property type="protein sequence ID" value="CAQ45054"/>
    <property type="gene ID" value="Smlt1518"/>
</dbReference>
<dbReference type="KEGG" id="sml:Smlt1518"/>
<dbReference type="PATRIC" id="fig|522373.3.peg.1455"/>
<dbReference type="eggNOG" id="COG0624">
    <property type="taxonomic scope" value="Bacteria"/>
</dbReference>
<dbReference type="HOGENOM" id="CLU_021802_4_0_6"/>
<dbReference type="UniPathway" id="UPA00034">
    <property type="reaction ID" value="UER00021"/>
</dbReference>
<dbReference type="Proteomes" id="UP000008840">
    <property type="component" value="Chromosome"/>
</dbReference>
<dbReference type="GO" id="GO:0008777">
    <property type="term" value="F:acetylornithine deacetylase activity"/>
    <property type="evidence" value="ECO:0007669"/>
    <property type="project" value="TreeGrafter"/>
</dbReference>
<dbReference type="GO" id="GO:0050897">
    <property type="term" value="F:cobalt ion binding"/>
    <property type="evidence" value="ECO:0007669"/>
    <property type="project" value="UniProtKB-UniRule"/>
</dbReference>
<dbReference type="GO" id="GO:0009014">
    <property type="term" value="F:succinyl-diaminopimelate desuccinylase activity"/>
    <property type="evidence" value="ECO:0007669"/>
    <property type="project" value="UniProtKB-UniRule"/>
</dbReference>
<dbReference type="GO" id="GO:0008270">
    <property type="term" value="F:zinc ion binding"/>
    <property type="evidence" value="ECO:0007669"/>
    <property type="project" value="UniProtKB-UniRule"/>
</dbReference>
<dbReference type="GO" id="GO:0019877">
    <property type="term" value="P:diaminopimelate biosynthetic process"/>
    <property type="evidence" value="ECO:0007669"/>
    <property type="project" value="UniProtKB-UniRule"/>
</dbReference>
<dbReference type="GO" id="GO:0006526">
    <property type="term" value="P:L-arginine biosynthetic process"/>
    <property type="evidence" value="ECO:0007669"/>
    <property type="project" value="TreeGrafter"/>
</dbReference>
<dbReference type="GO" id="GO:0009089">
    <property type="term" value="P:lysine biosynthetic process via diaminopimelate"/>
    <property type="evidence" value="ECO:0007669"/>
    <property type="project" value="UniProtKB-UniRule"/>
</dbReference>
<dbReference type="CDD" id="cd03891">
    <property type="entry name" value="M20_DapE_proteobac"/>
    <property type="match status" value="1"/>
</dbReference>
<dbReference type="FunFam" id="3.40.630.10:FF:000005">
    <property type="entry name" value="Succinyl-diaminopimelate desuccinylase"/>
    <property type="match status" value="1"/>
</dbReference>
<dbReference type="Gene3D" id="3.40.630.10">
    <property type="entry name" value="Zn peptidases"/>
    <property type="match status" value="2"/>
</dbReference>
<dbReference type="HAMAP" id="MF_01690">
    <property type="entry name" value="DapE"/>
    <property type="match status" value="1"/>
</dbReference>
<dbReference type="InterPro" id="IPR001261">
    <property type="entry name" value="ArgE/DapE_CS"/>
</dbReference>
<dbReference type="InterPro" id="IPR036264">
    <property type="entry name" value="Bact_exopeptidase_dim_dom"/>
</dbReference>
<dbReference type="InterPro" id="IPR005941">
    <property type="entry name" value="DapE_proteobac"/>
</dbReference>
<dbReference type="InterPro" id="IPR002933">
    <property type="entry name" value="Peptidase_M20"/>
</dbReference>
<dbReference type="InterPro" id="IPR011650">
    <property type="entry name" value="Peptidase_M20_dimer"/>
</dbReference>
<dbReference type="InterPro" id="IPR050072">
    <property type="entry name" value="Peptidase_M20A"/>
</dbReference>
<dbReference type="NCBIfam" id="TIGR01246">
    <property type="entry name" value="dapE_proteo"/>
    <property type="match status" value="1"/>
</dbReference>
<dbReference type="NCBIfam" id="NF009557">
    <property type="entry name" value="PRK13009.1"/>
    <property type="match status" value="1"/>
</dbReference>
<dbReference type="PANTHER" id="PTHR43808">
    <property type="entry name" value="ACETYLORNITHINE DEACETYLASE"/>
    <property type="match status" value="1"/>
</dbReference>
<dbReference type="PANTHER" id="PTHR43808:SF31">
    <property type="entry name" value="N-ACETYL-L-CITRULLINE DEACETYLASE"/>
    <property type="match status" value="1"/>
</dbReference>
<dbReference type="Pfam" id="PF07687">
    <property type="entry name" value="M20_dimer"/>
    <property type="match status" value="1"/>
</dbReference>
<dbReference type="Pfam" id="PF01546">
    <property type="entry name" value="Peptidase_M20"/>
    <property type="match status" value="1"/>
</dbReference>
<dbReference type="SUPFAM" id="SSF55031">
    <property type="entry name" value="Bacterial exopeptidase dimerisation domain"/>
    <property type="match status" value="1"/>
</dbReference>
<dbReference type="SUPFAM" id="SSF53187">
    <property type="entry name" value="Zn-dependent exopeptidases"/>
    <property type="match status" value="1"/>
</dbReference>
<dbReference type="PROSITE" id="PS00759">
    <property type="entry name" value="ARGE_DAPE_CPG2_2"/>
    <property type="match status" value="1"/>
</dbReference>
<accession>B2FIC0</accession>
<organism>
    <name type="scientific">Stenotrophomonas maltophilia (strain K279a)</name>
    <dbReference type="NCBI Taxonomy" id="522373"/>
    <lineage>
        <taxon>Bacteria</taxon>
        <taxon>Pseudomonadati</taxon>
        <taxon>Pseudomonadota</taxon>
        <taxon>Gammaproteobacteria</taxon>
        <taxon>Lysobacterales</taxon>
        <taxon>Lysobacteraceae</taxon>
        <taxon>Stenotrophomonas</taxon>
        <taxon>Stenotrophomonas maltophilia group</taxon>
    </lineage>
</organism>
<sequence length="375" mass="40406">MSAVLDLTCELIARPSVTPDDAGCQALLAARLKQAGFQCDHLRLGDVDNLWATHGLGAPVLVLLGHTDVVPTGPRESWTSDPFTPHIRDGVLYGRGAADMKGSVAAFVVAAEQFVADHPDHPGTLAVLLTSDEEGDAIDGVRHVARLFAARGQRIDWCITGEPSSTATLGDLLRVGRRGSLSAKLRVQGVQGHVAYPEKARNPIHQAAPALAELCARRWDDGYESFPPTSLQISNIHAGTGANNVIPGELDVDFNIRYNPHWDAPKLEAEITALLERHGLQYTLKWHRSGEPFYTPEGTLRAIARAVLAEHIGRAPEESTGGGTSDARFIAPLGAQCIEVGPVNASIHQVDENVRVDDLEALPGLYQRLVERLLV</sequence>
<comment type="function">
    <text evidence="1">Catalyzes the hydrolysis of N-succinyl-L,L-diaminopimelic acid (SDAP), forming succinate and LL-2,6-diaminopimelate (DAP), an intermediate involved in the bacterial biosynthesis of lysine and meso-diaminopimelic acid, an essential component of bacterial cell walls.</text>
</comment>
<comment type="catalytic activity">
    <reaction evidence="1">
        <text>N-succinyl-(2S,6S)-2,6-diaminopimelate + H2O = (2S,6S)-2,6-diaminopimelate + succinate</text>
        <dbReference type="Rhea" id="RHEA:22608"/>
        <dbReference type="ChEBI" id="CHEBI:15377"/>
        <dbReference type="ChEBI" id="CHEBI:30031"/>
        <dbReference type="ChEBI" id="CHEBI:57609"/>
        <dbReference type="ChEBI" id="CHEBI:58087"/>
        <dbReference type="EC" id="3.5.1.18"/>
    </reaction>
</comment>
<comment type="cofactor">
    <cofactor evidence="1">
        <name>Zn(2+)</name>
        <dbReference type="ChEBI" id="CHEBI:29105"/>
    </cofactor>
    <cofactor evidence="1">
        <name>Co(2+)</name>
        <dbReference type="ChEBI" id="CHEBI:48828"/>
    </cofactor>
    <text evidence="1">Binds 2 Zn(2+) or Co(2+) ions per subunit.</text>
</comment>
<comment type="pathway">
    <text evidence="1">Amino-acid biosynthesis; L-lysine biosynthesis via DAP pathway; LL-2,6-diaminopimelate from (S)-tetrahydrodipicolinate (succinylase route): step 3/3.</text>
</comment>
<comment type="subunit">
    <text evidence="1">Homodimer.</text>
</comment>
<comment type="similarity">
    <text evidence="1">Belongs to the peptidase M20A family. DapE subfamily.</text>
</comment>